<sequence>MKKIAFHIQKGGVGKTTLSGNIASYLSKTKKVILVDCDIQQASSSTWFLNHEILKLDIKDFLLKKMDVDQVVRQIQKNFYILPCVPSGTFRRDVQHELQDFPYLIDDFCLELEKLGFEFAIFDLSPSFELWERRIILAMCEVITPLTPEFLSLEGINIFKEEFESLLKSYRKKVKHEKIICNMLNKSFKRHNLHLRQFKTFGYDLYEVGQDAKIAESQLYKKSIFDYYPESRSVLELSRLGDALCL</sequence>
<accession>P70843</accession>
<accession>O51009</accession>
<protein>
    <recommendedName>
        <fullName>Uncharacterized protein BBD21</fullName>
    </recommendedName>
</protein>
<reference key="1">
    <citation type="journal article" date="1996" name="J. Bacteriol.">
        <title>The nucleotide sequence of a linear plasmid of Borrelia burgdorferi reveals similarities to those of circular plasmids of other prokaryotes.</title>
        <authorList>
            <person name="Barbour A.G."/>
            <person name="Carter C.J."/>
            <person name="Bundoc V."/>
            <person name="Hinnebusch J."/>
        </authorList>
    </citation>
    <scope>NUCLEOTIDE SEQUENCE [GENOMIC DNA]</scope>
    <source>
        <strain>ATCC 35210 / DSM 4680 / CIP 102532 / B31</strain>
    </source>
</reference>
<reference key="2">
    <citation type="journal article" date="1997" name="Nature">
        <title>Genomic sequence of a Lyme disease spirochaete, Borrelia burgdorferi.</title>
        <authorList>
            <person name="Fraser C.M."/>
            <person name="Casjens S."/>
            <person name="Huang W.M."/>
            <person name="Sutton G.G."/>
            <person name="Clayton R.A."/>
            <person name="Lathigra R."/>
            <person name="White O."/>
            <person name="Ketchum K.A."/>
            <person name="Dodson R.J."/>
            <person name="Hickey E.K."/>
            <person name="Gwinn M.L."/>
            <person name="Dougherty B.A."/>
            <person name="Tomb J.-F."/>
            <person name="Fleischmann R.D."/>
            <person name="Richardson D.L."/>
            <person name="Peterson J.D."/>
            <person name="Kerlavage A.R."/>
            <person name="Quackenbush J."/>
            <person name="Salzberg S.L."/>
            <person name="Hanson M."/>
            <person name="van Vugt R."/>
            <person name="Palmer N."/>
            <person name="Adams M.D."/>
            <person name="Gocayne J.D."/>
            <person name="Weidman J.F."/>
            <person name="Utterback T.R."/>
            <person name="Watthey L."/>
            <person name="McDonald L.A."/>
            <person name="Artiach P."/>
            <person name="Bowman C."/>
            <person name="Garland S.A."/>
            <person name="Fujii C."/>
            <person name="Cotton M.D."/>
            <person name="Horst K."/>
            <person name="Roberts K.M."/>
            <person name="Hatch B."/>
            <person name="Smith H.O."/>
            <person name="Venter J.C."/>
        </authorList>
    </citation>
    <scope>NUCLEOTIDE SEQUENCE [LARGE SCALE GENOMIC DNA]</scope>
    <source>
        <strain>ATCC 35210 / DSM 4680 / CIP 102532 / B31</strain>
    </source>
</reference>
<gene>
    <name type="ordered locus">BB_D21</name>
    <name type="ORF">CdsM</name>
</gene>
<organism>
    <name type="scientific">Borreliella burgdorferi (strain ATCC 35210 / DSM 4680 / CIP 102532 / B31)</name>
    <name type="common">Borrelia burgdorferi</name>
    <dbReference type="NCBI Taxonomy" id="224326"/>
    <lineage>
        <taxon>Bacteria</taxon>
        <taxon>Pseudomonadati</taxon>
        <taxon>Spirochaetota</taxon>
        <taxon>Spirochaetia</taxon>
        <taxon>Spirochaetales</taxon>
        <taxon>Borreliaceae</taxon>
        <taxon>Borreliella</taxon>
    </lineage>
</organism>
<geneLocation type="plasmid">
    <name>lp17 (linear 17 kb)</name>
    <name>lp16</name>
</geneLocation>
<proteinExistence type="predicted"/>
<keyword id="KW-0614">Plasmid</keyword>
<keyword id="KW-1185">Reference proteome</keyword>
<feature type="chain" id="PRO_0000174426" description="Uncharacterized protein BBD21">
    <location>
        <begin position="1"/>
        <end position="246"/>
    </location>
</feature>
<feature type="sequence conflict" description="In Ref. 1; AAB38561." evidence="1" ref="1">
    <original>N</original>
    <variation>S</variation>
    <location>
        <position position="50"/>
    </location>
</feature>
<feature type="sequence conflict" description="In Ref. 1; AAB38561." evidence="1" ref="1">
    <original>D</original>
    <variation>E</variation>
    <location>
        <position position="67"/>
    </location>
</feature>
<feature type="sequence conflict" description="In Ref. 1; AAB38561." evidence="1" ref="1">
    <original>C</original>
    <variation>Y</variation>
    <location>
        <position position="109"/>
    </location>
</feature>
<evidence type="ECO:0000305" key="1"/>
<name>Y2821_BORBU</name>
<dbReference type="EMBL" id="U43414">
    <property type="protein sequence ID" value="AAB38561.1"/>
    <property type="molecule type" value="Genomic_DNA"/>
</dbReference>
<dbReference type="EMBL" id="AE000793">
    <property type="protein sequence ID" value="AAC66345.1"/>
    <property type="molecule type" value="Genomic_DNA"/>
</dbReference>
<dbReference type="PIR" id="H70223">
    <property type="entry name" value="H70223"/>
</dbReference>
<dbReference type="RefSeq" id="NP_045404.1">
    <property type="nucleotide sequence ID" value="NC_001849.2"/>
</dbReference>
<dbReference type="RefSeq" id="WP_010257677.1">
    <property type="nucleotide sequence ID" value="NC_001849.2"/>
</dbReference>
<dbReference type="SMR" id="P70843"/>
<dbReference type="IntAct" id="P70843">
    <property type="interactions" value="1"/>
</dbReference>
<dbReference type="DNASU" id="1194014"/>
<dbReference type="EnsemblBacteria" id="AAC66345">
    <property type="protein sequence ID" value="AAC66345"/>
    <property type="gene ID" value="BB_D21"/>
</dbReference>
<dbReference type="KEGG" id="bbu:BB_D21"/>
<dbReference type="PATRIC" id="fig|224326.49.peg.1263"/>
<dbReference type="HOGENOM" id="CLU_037612_1_4_12"/>
<dbReference type="OrthoDB" id="306833at2"/>
<dbReference type="Proteomes" id="UP000001807">
    <property type="component" value="Plasmid lp17"/>
</dbReference>
<dbReference type="CDD" id="cd02042">
    <property type="entry name" value="ParAB_family"/>
    <property type="match status" value="1"/>
</dbReference>
<dbReference type="Gene3D" id="3.40.50.300">
    <property type="entry name" value="P-loop containing nucleotide triphosphate hydrolases"/>
    <property type="match status" value="1"/>
</dbReference>
<dbReference type="InterPro" id="IPR025669">
    <property type="entry name" value="AAA_dom"/>
</dbReference>
<dbReference type="InterPro" id="IPR050678">
    <property type="entry name" value="DNA_Partitioning_ATPase"/>
</dbReference>
<dbReference type="InterPro" id="IPR027417">
    <property type="entry name" value="P-loop_NTPase"/>
</dbReference>
<dbReference type="PANTHER" id="PTHR13696:SF99">
    <property type="entry name" value="COBYRINIC ACID AC-DIAMIDE SYNTHASE"/>
    <property type="match status" value="1"/>
</dbReference>
<dbReference type="PANTHER" id="PTHR13696">
    <property type="entry name" value="P-LOOP CONTAINING NUCLEOSIDE TRIPHOSPHATE HYDROLASE"/>
    <property type="match status" value="1"/>
</dbReference>
<dbReference type="Pfam" id="PF13614">
    <property type="entry name" value="AAA_31"/>
    <property type="match status" value="1"/>
</dbReference>
<dbReference type="SUPFAM" id="SSF52540">
    <property type="entry name" value="P-loop containing nucleoside triphosphate hydrolases"/>
    <property type="match status" value="1"/>
</dbReference>